<name>CCMM_SYNY3</name>
<protein>
    <recommendedName>
        <fullName evidence="7">Carboxysome assembly protein CcmM</fullName>
        <shortName evidence="6">CcmM73</shortName>
        <shortName evidence="6">M73</shortName>
    </recommendedName>
    <alternativeName>
        <fullName>Carbon dioxide concentrating mechanism protein CcmM</fullName>
    </alternativeName>
</protein>
<keyword id="KW-0024">Alternative initiation</keyword>
<keyword id="KW-1283">Bacterial microcompartment</keyword>
<keyword id="KW-0120">Carbon dioxide fixation</keyword>
<keyword id="KW-1282">Carboxysome</keyword>
<keyword id="KW-0602">Photosynthesis</keyword>
<keyword id="KW-1185">Reference proteome</keyword>
<keyword id="KW-0677">Repeat</keyword>
<proteinExistence type="evidence at protein level"/>
<reference key="1">
    <citation type="journal article" date="1996" name="DNA Res.">
        <title>Sequence analysis of the genome of the unicellular cyanobacterium Synechocystis sp. strain PCC6803. II. Sequence determination of the entire genome and assignment of potential protein-coding regions.</title>
        <authorList>
            <person name="Kaneko T."/>
            <person name="Sato S."/>
            <person name="Kotani H."/>
            <person name="Tanaka A."/>
            <person name="Asamizu E."/>
            <person name="Nakamura Y."/>
            <person name="Miyajima N."/>
            <person name="Hirosawa M."/>
            <person name="Sugiura M."/>
            <person name="Sasamoto S."/>
            <person name="Kimura T."/>
            <person name="Hosouchi T."/>
            <person name="Matsuno A."/>
            <person name="Muraki A."/>
            <person name="Nakazaki N."/>
            <person name="Naruo K."/>
            <person name="Okumura S."/>
            <person name="Shimpo S."/>
            <person name="Takeuchi C."/>
            <person name="Wada T."/>
            <person name="Watanabe A."/>
            <person name="Yamada M."/>
            <person name="Yasuda M."/>
            <person name="Tabata S."/>
        </authorList>
    </citation>
    <scope>NUCLEOTIDE SEQUENCE [LARGE SCALE GENOMIC DNA]</scope>
    <source>
        <strain>ATCC 27184 / PCC 6803 / Kazusa</strain>
    </source>
</reference>
<reference key="2">
    <citation type="journal article" date="2005" name="Can. J. Bot.">
        <title>Cyanobacterial carbonic anhydrases.</title>
        <authorList>
            <person name="So A.K."/>
            <person name="Espie G.S."/>
        </authorList>
    </citation>
    <scope>LACK OF CARBONIC ANHYDRASE ACTIVITY</scope>
    <source>
        <strain>ATCC 27184 / PCC 6803 / Kazusa</strain>
    </source>
</reference>
<reference key="3">
    <citation type="journal article" date="2007" name="J. Biol. Chem.">
        <title>Analysis of carboxysomes from Synechococcus PCC7942 reveals multiple Rubisco complexes with carboxysomal proteins CcmM and CcaA.</title>
        <authorList>
            <person name="Long B.M."/>
            <person name="Badger M.R."/>
            <person name="Whitney S.M."/>
            <person name="Price G.D."/>
        </authorList>
    </citation>
    <scope>DISCUSSION OF SEQUENCE</scope>
    <scope>ISOFORMS CCMM73 AND CCMM52</scope>
    <source>
        <strain>ATCC 27184 / PCC 6803 / Kazusa</strain>
    </source>
</reference>
<reference key="4">
    <citation type="journal article" date="2008" name="J. Bacteriol.">
        <title>A multiprotein bicarbonate dehydration complex essential to carboxysome function in cyanobacteria.</title>
        <authorList>
            <person name="Cot S.S."/>
            <person name="So A.K."/>
            <person name="Espie G.S."/>
        </authorList>
    </citation>
    <scope>FUNCTION</scope>
    <scope>INTERACTION WITH CARBONIC ANHYDRASE (CCAA); CCMK1; CCMK2; CCMK4; CCML; CCMM AND CCMN</scope>
    <scope>SUBCELLULAR LOCATION</scope>
    <scope>MULTIPLE PROTEIN FORMS</scope>
    <scope>ISOFORM M52</scope>
    <source>
        <strain>ATCC 27184 / PCC 6803 / Kazusa</strain>
    </source>
</reference>
<reference key="5">
    <citation type="journal article" date="2016" name="Biochem. J.">
        <title>The structure, kinetics and interactions of the beta-carboxysomal beta-carbonic anhydrase, CcaA.</title>
        <authorList>
            <person name="McGurn L.D."/>
            <person name="Moazami-Goudarzi M."/>
            <person name="White S.A."/>
            <person name="Suwal T."/>
            <person name="Brar B."/>
            <person name="Tang J.Q."/>
            <person name="Espie G.S."/>
            <person name="Kimber M.S."/>
        </authorList>
    </citation>
    <scope>INTERACTION WITH CCAA</scope>
    <scope>MUTAGENESIS OF 177-GLN--GLN-188</scope>
    <source>
        <strain>ATCC 27184 / PCC 6803 / Kazusa</strain>
    </source>
</reference>
<accession>P72758</accession>
<sequence length="687" mass="73121">MLAKSLGWLLAVSRRNYCMGSRTALASRPWSKHLADPQIDPTAYVHSFANVVGDVRIQPGVSVAPGSSIRADEGTPFWIGGNVLIQHGVVIHGLETGRVLGDDDQEYSVWIGPGTCVAHLALVHGPVYLGANCFIGFRSTVLNARVGDGAVVMMHSLVQDVEIPPNKLVPSGAMITQQHQADSLPDVQAGDRHFVQQIAAMHGQSASPTQGTDPTVCVLPESLPAVTPVTETPYINSIDNMSINSDITNQIRSLLAQGYGIGAEHANERRFKTKSWQSCGTADGFRPDQVIATVEGWLQEFAGEYVRLIGIDQGAKRRVVEVIIQRPGDVPGSPSRGTTTTKALSSGGSGRSAVAHQTGNLAGDSANQLRALLHQGYKIGLEYASARRFKTGSWLTGGTIGSHREGEALQELNRFLADHTNEYVRIIGIDPAGKRRVAEIVVHRPNGNGNGKPSSSSSSVGYKSAPVSSAGGSSAGGLTPEVIATVRGLLANGHSIGTEHTDKRRFKAKSWDTCPTIDGGREAEVLAKLEACLADHAGEYVRIIGIDRVGKRRVLEQIIQRPGDNVVAGRSPSSSSASTSSSASSNGFGSGNGGGYSNSAVRLDNSVVTQVRSLLAQGYKIGTEHTDKRRFKAKSWQSCAPITSTHESEVLRALEGCLADHNGEYVRLLGIDPTAKRRVLETIIQRP</sequence>
<organism>
    <name type="scientific">Synechocystis sp. (strain ATCC 27184 / PCC 6803 / Kazusa)</name>
    <dbReference type="NCBI Taxonomy" id="1111708"/>
    <lineage>
        <taxon>Bacteria</taxon>
        <taxon>Bacillati</taxon>
        <taxon>Cyanobacteriota</taxon>
        <taxon>Cyanophyceae</taxon>
        <taxon>Synechococcales</taxon>
        <taxon>Merismopediaceae</taxon>
        <taxon>Synechocystis</taxon>
    </lineage>
</organism>
<gene>
    <name evidence="6" type="primary">ccmM</name>
    <name type="ordered locus">sll1031</name>
</gene>
<feature type="chain" id="PRO_0000451242" description="Carboxysome assembly protein CcmM">
    <location>
        <begin position="1"/>
        <end position="687"/>
    </location>
</feature>
<feature type="region of interest" description="RbcS-like repeat 1, SSUL1" evidence="9">
    <location>
        <begin position="242"/>
        <end position="327"/>
    </location>
</feature>
<feature type="region of interest" description="Disordered" evidence="2">
    <location>
        <begin position="328"/>
        <end position="355"/>
    </location>
</feature>
<feature type="region of interest" description="RbcS-like repeat 2, SSUL2" evidence="9">
    <location>
        <begin position="366"/>
        <end position="445"/>
    </location>
</feature>
<feature type="region of interest" description="Disordered" evidence="2">
    <location>
        <begin position="442"/>
        <end position="476"/>
    </location>
</feature>
<feature type="region of interest" description="RbcS-like repeat 3, SSUL3" evidence="9">
    <location>
        <begin position="480"/>
        <end position="562"/>
    </location>
</feature>
<feature type="region of interest" description="Disordered" evidence="2">
    <location>
        <begin position="565"/>
        <end position="590"/>
    </location>
</feature>
<feature type="region of interest" description="RbcS-like repeat 4, SSUL4" evidence="9">
    <location>
        <begin position="599"/>
        <end position="687"/>
    </location>
</feature>
<feature type="compositionally biased region" description="Polar residues" evidence="2">
    <location>
        <begin position="335"/>
        <end position="346"/>
    </location>
</feature>
<feature type="compositionally biased region" description="Low complexity" evidence="2">
    <location>
        <begin position="451"/>
        <end position="472"/>
    </location>
</feature>
<feature type="compositionally biased region" description="Low complexity" evidence="2">
    <location>
        <begin position="568"/>
        <end position="587"/>
    </location>
</feature>
<feature type="splice variant" id="VSP_060774" description="In isoform CcmM52." evidence="8">
    <location>
        <begin position="1"/>
        <end position="240"/>
    </location>
</feature>
<feature type="mutagenesis site" description="Decreases affinity for CcaA." evidence="4">
    <original>QQHQADSLPDVQ</original>
    <variation>AQAQADSLPAVA</variation>
    <location>
        <begin position="177"/>
        <end position="188"/>
    </location>
</feature>
<evidence type="ECO:0000250" key="1">
    <source>
        <dbReference type="UniProtKB" id="Q03513"/>
    </source>
</evidence>
<evidence type="ECO:0000256" key="2">
    <source>
        <dbReference type="SAM" id="MobiDB-lite"/>
    </source>
</evidence>
<evidence type="ECO:0000269" key="3">
    <source>
    </source>
</evidence>
<evidence type="ECO:0000269" key="4">
    <source>
    </source>
</evidence>
<evidence type="ECO:0000269" key="5">
    <source ref="2"/>
</evidence>
<evidence type="ECO:0000303" key="6">
    <source>
    </source>
</evidence>
<evidence type="ECO:0000305" key="7"/>
<evidence type="ECO:0000305" key="8">
    <source>
    </source>
</evidence>
<evidence type="ECO:0000305" key="9">
    <source>
    </source>
</evidence>
<comment type="function">
    <text evidence="1 3 5">Functions as a scaffold protein for the assembly of beta-carboxysomes, initiates carboxysome assembly via its N-terminal domain binding to CcaA, CcmK and CcmL. Binds HCO(3)-, suggesting it may play a role in the activity or regulation of bicarbonate dehydration (PubMed:17993516). Also initiates carboxysome assembly by coalescing RuBisCO (ribulose bisphosphate carboxylase, rbcL-rbcS) via its SSU-like domains. Produced as a full-length and a shorter form; both forms are required for correct carboxysome assembly and growth (By similarity). Despite its strong similarity to gamma-class carbonic anhydrase (CA) it does not have detectable CA activity (PubMed:17993516, Ref.2).</text>
</comment>
<comment type="function">
    <text evidence="1 3 4">Beta-carboxysome assembly initiates when soluble RuBisCO is condensed into a liquid matrix in a pre-carboxysome by the RbcS-like domains of probably both forms of CcmM. CcmN interacts with the N-terminus of full length CcmM, and then recruits the shell proteins (CcmK) via CcmN's encapsulation peptide. CcmM73 also interacts with CcmK proteins and CcmL directly. Shell formation requires CcmK proteins and CcmO. CcmL caps the otherwise elongated carboxysome. Once fully encapsulated carboxysomes are formed, they migrate within the cell probably via interactions with the cytoskeleton.</text>
</comment>
<comment type="subunit">
    <text evidence="3 4 9">Probably forms homotrimers (Probable). Full length CcmM interacts with CcaA, CcmK1, CcmK2, CcmK4, CcmL, CcmN and itself, while the N-terminus of CcmM (first 249 residues) only interacts with CcaA, CcmM and CcmN. A probable CcmM-CcaA-CcmN complex as well as a CcaA-RuBisCO-CcmM complex can also be isolated (PubMed:17993516). Interacts with full-length CcaA and the first 220 residues of CcaA; surface residues Gln-177 to Gln-188 are responsible in part for binding (PubMed:27729545).</text>
</comment>
<comment type="interaction">
    <interactant intactId="EBI-862848">
        <id>P72758</id>
    </interactant>
    <interactant intactId="EBI-1622341">
        <id>Q54735</id>
        <label>ccaA</label>
    </interactant>
    <organismsDiffer>false</organismsDiffer>
    <experiments>6</experiments>
</comment>
<comment type="interaction">
    <interactant intactId="EBI-862848">
        <id>P72758</id>
    </interactant>
    <interactant intactId="EBI-1609426">
        <id>P72757</id>
        <label>ccmN</label>
    </interactant>
    <organismsDiffer>false</organismsDiffer>
    <experiments>3</experiments>
</comment>
<comment type="interaction">
    <interactant intactId="EBI-862848">
        <id>P72758</id>
    </interactant>
    <interactant intactId="EBI-862916">
        <id>P52231</id>
        <label>trxA</label>
    </interactant>
    <organismsDiffer>false</organismsDiffer>
    <experiments>2</experiments>
</comment>
<comment type="subcellular location">
    <subcellularLocation>
        <location evidence="3">Carboxysome</location>
    </subcellularLocation>
    <text evidence="3">This cyanobacterium makes beta-type carboxysomes. Full length protein associates with the shell portion of carboxysomes, CcmM52 associates with both the soluble and shell portion of carboxysomes.</text>
</comment>
<comment type="alternative products">
    <event type="alternative initiation"/>
    <isoform>
        <id>P72758-1</id>
        <name evidence="9">CcmM73</name>
        <sequence type="displayed"/>
    </isoform>
    <isoform>
        <id>P72758-2</id>
        <name evidence="8 9">CcmM52</name>
        <sequence type="described" ref="VSP_060774"/>
    </isoform>
</comment>
<comment type="domain">
    <text evidence="3">The N-terminus has a gamma-class carbonic anhydrase-like domain (CA), while the C-terminus has 4 repeats that are similar to the small subunit of RuBisCO (rbcS), called SSUL. The SSUL are connected by flexible linkers. The N-terminal domain forms a scaffold on which CA and other carboxysomal proteins assemble, while the C-terminus binds RuBisCO.</text>
</comment>
<comment type="PTM">
    <text evidence="3">Multiple forms of the protein of 73 (full length), 62, 52 (the most predominant form) and 36 kDa are seen even in the presence of protease inhibitors. CcmM52 interacts with CcaA.</text>
</comment>
<comment type="similarity">
    <text evidence="9">Belongs to the gamma-class carbonic anhydrase family.</text>
</comment>
<dbReference type="EMBL" id="BA000022">
    <property type="protein sequence ID" value="BAA16773.1"/>
    <property type="molecule type" value="Genomic_DNA"/>
</dbReference>
<dbReference type="PIR" id="S74621">
    <property type="entry name" value="S74621"/>
</dbReference>
<dbReference type="SMR" id="P72758"/>
<dbReference type="IntAct" id="P72758">
    <property type="interactions" value="14"/>
</dbReference>
<dbReference type="STRING" id="1148.gene:10497629"/>
<dbReference type="PaxDb" id="1148-1651846"/>
<dbReference type="EnsemblBacteria" id="BAA16773">
    <property type="protein sequence ID" value="BAA16773"/>
    <property type="gene ID" value="BAA16773"/>
</dbReference>
<dbReference type="KEGG" id="syn:sll1031"/>
<dbReference type="eggNOG" id="COG0663">
    <property type="taxonomic scope" value="Bacteria"/>
</dbReference>
<dbReference type="eggNOG" id="COG4451">
    <property type="taxonomic scope" value="Bacteria"/>
</dbReference>
<dbReference type="InParanoid" id="P72758"/>
<dbReference type="BRENDA" id="4.2.1.1">
    <property type="organism ID" value="6192"/>
</dbReference>
<dbReference type="Proteomes" id="UP000001425">
    <property type="component" value="Chromosome"/>
</dbReference>
<dbReference type="GO" id="GO:0031470">
    <property type="term" value="C:carboxysome"/>
    <property type="evidence" value="ECO:0000314"/>
    <property type="project" value="UniProtKB"/>
</dbReference>
<dbReference type="GO" id="GO:0043886">
    <property type="term" value="F:structural constituent of carboxysome shell"/>
    <property type="evidence" value="ECO:0000314"/>
    <property type="project" value="UniProtKB"/>
</dbReference>
<dbReference type="GO" id="GO:0015977">
    <property type="term" value="P:carbon fixation"/>
    <property type="evidence" value="ECO:0007669"/>
    <property type="project" value="UniProtKB-KW"/>
</dbReference>
<dbReference type="GO" id="GO:0015979">
    <property type="term" value="P:photosynthesis"/>
    <property type="evidence" value="ECO:0007669"/>
    <property type="project" value="UniProtKB-KW"/>
</dbReference>
<dbReference type="CDD" id="cd00710">
    <property type="entry name" value="LbH_gamma_CA"/>
    <property type="match status" value="1"/>
</dbReference>
<dbReference type="CDD" id="cd00307">
    <property type="entry name" value="RuBisCO_small_like"/>
    <property type="match status" value="4"/>
</dbReference>
<dbReference type="Gene3D" id="2.160.10.10">
    <property type="entry name" value="Hexapeptide repeat proteins"/>
    <property type="match status" value="1"/>
</dbReference>
<dbReference type="Gene3D" id="3.30.190.10">
    <property type="entry name" value="Ribulose bisphosphate carboxylase, small subunit"/>
    <property type="match status" value="4"/>
</dbReference>
<dbReference type="InterPro" id="IPR047223">
    <property type="entry name" value="CA_gamma_LbH"/>
</dbReference>
<dbReference type="InterPro" id="IPR017156">
    <property type="entry name" value="CcmM"/>
</dbReference>
<dbReference type="InterPro" id="IPR052265">
    <property type="entry name" value="Gamma-CA"/>
</dbReference>
<dbReference type="InterPro" id="IPR000894">
    <property type="entry name" value="RuBisCO_ssu_dom"/>
</dbReference>
<dbReference type="InterPro" id="IPR036385">
    <property type="entry name" value="RuBisCO_ssu_sf"/>
</dbReference>
<dbReference type="InterPro" id="IPR011004">
    <property type="entry name" value="Trimer_LpxA-like_sf"/>
</dbReference>
<dbReference type="PANTHER" id="PTHR43360">
    <property type="entry name" value="CARBON DIOXIDE CONCENTRATING MECHANISM PROTEIN CCMM"/>
    <property type="match status" value="1"/>
</dbReference>
<dbReference type="PANTHER" id="PTHR43360:SF1">
    <property type="entry name" value="CARBOXYSOME ASSEMBLY PROTEIN CCMM"/>
    <property type="match status" value="1"/>
</dbReference>
<dbReference type="Pfam" id="PF00101">
    <property type="entry name" value="RuBisCO_small"/>
    <property type="match status" value="4"/>
</dbReference>
<dbReference type="PIRSF" id="PIRSF037250">
    <property type="entry name" value="CcmM"/>
    <property type="match status" value="1"/>
</dbReference>
<dbReference type="SMART" id="SM00961">
    <property type="entry name" value="RuBisCO_small"/>
    <property type="match status" value="4"/>
</dbReference>
<dbReference type="SUPFAM" id="SSF55239">
    <property type="entry name" value="RuBisCO, small subunit"/>
    <property type="match status" value="4"/>
</dbReference>
<dbReference type="SUPFAM" id="SSF51161">
    <property type="entry name" value="Trimeric LpxA-like enzymes"/>
    <property type="match status" value="1"/>
</dbReference>